<sequence>TLYFIFGIWSGLLGTSLSLMIRTELGQPGSLLNDDQLYNVIVTAHAFVMIFFLVMPVMIGGFGNWLVPLMLGAPDMAFPRMNNMSFWLLPPSLTLLLSSAPVESGAGTGWTVYPPLSSNLAHMGPSVDLAIFSLHLAGISSIPGAINFITTIINMRWEGMMMERLPLFVWSVFITAILLLLSLPVLAGAITMLLTDRNFNTTFFDPSGGGDPILYQHLF</sequence>
<accession>Q9ZZ08</accession>
<evidence type="ECO:0000250" key="1">
    <source>
        <dbReference type="UniProtKB" id="P00401"/>
    </source>
</evidence>
<evidence type="ECO:0000255" key="2"/>
<evidence type="ECO:0000305" key="3"/>
<name>COX1_HAPMA</name>
<keyword id="KW-0106">Calcium</keyword>
<keyword id="KW-0186">Copper</keyword>
<keyword id="KW-0249">Electron transport</keyword>
<keyword id="KW-0349">Heme</keyword>
<keyword id="KW-0408">Iron</keyword>
<keyword id="KW-0472">Membrane</keyword>
<keyword id="KW-0479">Metal-binding</keyword>
<keyword id="KW-0496">Mitochondrion</keyword>
<keyword id="KW-0999">Mitochondrion inner membrane</keyword>
<keyword id="KW-0679">Respiratory chain</keyword>
<keyword id="KW-1278">Translocase</keyword>
<keyword id="KW-0812">Transmembrane</keyword>
<keyword id="KW-1133">Transmembrane helix</keyword>
<keyword id="KW-0813">Transport</keyword>
<organism>
    <name type="scientific">Hapalochlaena maculosa</name>
    <name type="common">Southern blue-ringed octopus</name>
    <name type="synonym">Octopus maculosus</name>
    <dbReference type="NCBI Taxonomy" id="61716"/>
    <lineage>
        <taxon>Eukaryota</taxon>
        <taxon>Metazoa</taxon>
        <taxon>Spiralia</taxon>
        <taxon>Lophotrochozoa</taxon>
        <taxon>Mollusca</taxon>
        <taxon>Cephalopoda</taxon>
        <taxon>Coleoidea</taxon>
        <taxon>Octopodiformes</taxon>
        <taxon>Octopoda</taxon>
        <taxon>Incirrata</taxon>
        <taxon>Octopodidae</taxon>
        <taxon>Hapalochlaena</taxon>
    </lineage>
</organism>
<dbReference type="EC" id="7.1.1.9"/>
<dbReference type="EMBL" id="AF000043">
    <property type="protein sequence ID" value="AAC95088.1"/>
    <property type="molecule type" value="Genomic_DNA"/>
</dbReference>
<dbReference type="SMR" id="Q9ZZ08"/>
<dbReference type="UniPathway" id="UPA00705"/>
<dbReference type="GO" id="GO:0005743">
    <property type="term" value="C:mitochondrial inner membrane"/>
    <property type="evidence" value="ECO:0007669"/>
    <property type="project" value="UniProtKB-SubCell"/>
</dbReference>
<dbReference type="GO" id="GO:0004129">
    <property type="term" value="F:cytochrome-c oxidase activity"/>
    <property type="evidence" value="ECO:0007669"/>
    <property type="project" value="UniProtKB-EC"/>
</dbReference>
<dbReference type="GO" id="GO:0020037">
    <property type="term" value="F:heme binding"/>
    <property type="evidence" value="ECO:0007669"/>
    <property type="project" value="InterPro"/>
</dbReference>
<dbReference type="GO" id="GO:0046872">
    <property type="term" value="F:metal ion binding"/>
    <property type="evidence" value="ECO:0007669"/>
    <property type="project" value="UniProtKB-KW"/>
</dbReference>
<dbReference type="GO" id="GO:0015990">
    <property type="term" value="P:electron transport coupled proton transport"/>
    <property type="evidence" value="ECO:0007669"/>
    <property type="project" value="TreeGrafter"/>
</dbReference>
<dbReference type="GO" id="GO:0006123">
    <property type="term" value="P:mitochondrial electron transport, cytochrome c to oxygen"/>
    <property type="evidence" value="ECO:0007669"/>
    <property type="project" value="TreeGrafter"/>
</dbReference>
<dbReference type="Gene3D" id="1.20.210.10">
    <property type="entry name" value="Cytochrome c oxidase-like, subunit I domain"/>
    <property type="match status" value="1"/>
</dbReference>
<dbReference type="InterPro" id="IPR023616">
    <property type="entry name" value="Cyt_c_oxase-like_su1_dom"/>
</dbReference>
<dbReference type="InterPro" id="IPR036927">
    <property type="entry name" value="Cyt_c_oxase-like_su1_sf"/>
</dbReference>
<dbReference type="InterPro" id="IPR000883">
    <property type="entry name" value="Cyt_C_Oxase_1"/>
</dbReference>
<dbReference type="PANTHER" id="PTHR10422">
    <property type="entry name" value="CYTOCHROME C OXIDASE SUBUNIT 1"/>
    <property type="match status" value="1"/>
</dbReference>
<dbReference type="PANTHER" id="PTHR10422:SF18">
    <property type="entry name" value="CYTOCHROME C OXIDASE SUBUNIT 1"/>
    <property type="match status" value="1"/>
</dbReference>
<dbReference type="Pfam" id="PF00115">
    <property type="entry name" value="COX1"/>
    <property type="match status" value="1"/>
</dbReference>
<dbReference type="PRINTS" id="PR01165">
    <property type="entry name" value="CYCOXIDASEI"/>
</dbReference>
<dbReference type="SUPFAM" id="SSF81442">
    <property type="entry name" value="Cytochrome c oxidase subunit I-like"/>
    <property type="match status" value="1"/>
</dbReference>
<dbReference type="PROSITE" id="PS50855">
    <property type="entry name" value="COX1"/>
    <property type="match status" value="1"/>
</dbReference>
<geneLocation type="mitochondrion"/>
<reference key="1">
    <citation type="journal article" date="1999" name="Bull. Mar. Sci.">
        <title>Phylogenetic analysis of cytochrome c oxidase I sequences to determine higher-level relationships within the coleoid cephalopods.</title>
        <authorList>
            <person name="Carlini D.B."/>
            <person name="Graves J.E."/>
        </authorList>
    </citation>
    <scope>NUCLEOTIDE SEQUENCE [GENOMIC DNA]</scope>
</reference>
<comment type="function">
    <text evidence="1">Component of the cytochrome c oxidase, the last enzyme in the mitochondrial electron transport chain which drives oxidative phosphorylation. The respiratory chain contains 3 multisubunit complexes succinate dehydrogenase (complex II, CII), ubiquinol-cytochrome c oxidoreductase (cytochrome b-c1 complex, complex III, CIII) and cytochrome c oxidase (complex IV, CIV), that cooperate to transfer electrons derived from NADH and succinate to molecular oxygen, creating an electrochemical gradient over the inner membrane that drives transmembrane transport and the ATP synthase. Cytochrome c oxidase is the component of the respiratory chain that catalyzes the reduction of oxygen to water. Electrons originating from reduced cytochrome c in the intermembrane space (IMS) are transferred via the dinuclear copper A center (CU(A)) of subunit 2 and heme A of subunit 1 to the active site in subunit 1, a binuclear center (BNC) formed by heme A3 and copper B (CU(B)). The BNC reduces molecular oxygen to 2 water molecules using 4 electrons from cytochrome c in the IMS and 4 protons from the mitochondrial matrix.</text>
</comment>
<comment type="catalytic activity">
    <reaction evidence="1">
        <text>4 Fe(II)-[cytochrome c] + O2 + 8 H(+)(in) = 4 Fe(III)-[cytochrome c] + 2 H2O + 4 H(+)(out)</text>
        <dbReference type="Rhea" id="RHEA:11436"/>
        <dbReference type="Rhea" id="RHEA-COMP:10350"/>
        <dbReference type="Rhea" id="RHEA-COMP:14399"/>
        <dbReference type="ChEBI" id="CHEBI:15377"/>
        <dbReference type="ChEBI" id="CHEBI:15378"/>
        <dbReference type="ChEBI" id="CHEBI:15379"/>
        <dbReference type="ChEBI" id="CHEBI:29033"/>
        <dbReference type="ChEBI" id="CHEBI:29034"/>
        <dbReference type="EC" id="7.1.1.9"/>
    </reaction>
    <physiologicalReaction direction="left-to-right" evidence="1">
        <dbReference type="Rhea" id="RHEA:11437"/>
    </physiologicalReaction>
</comment>
<comment type="cofactor">
    <cofactor evidence="1">
        <name>heme</name>
        <dbReference type="ChEBI" id="CHEBI:30413"/>
    </cofactor>
    <text evidence="1">Binds 2 heme A groups non-covalently per subunit.</text>
</comment>
<comment type="cofactor">
    <cofactor evidence="1">
        <name>Cu cation</name>
        <dbReference type="ChEBI" id="CHEBI:23378"/>
    </cofactor>
    <text evidence="1">Binds a copper B center.</text>
</comment>
<comment type="pathway">
    <text evidence="1">Energy metabolism; oxidative phosphorylation.</text>
</comment>
<comment type="subunit">
    <text evidence="1">Component of the cytochrome c oxidase (complex IV, CIV), a multisubunit enzyme composed of a catalytic core of 3 subunits and several supernumerary subunits. The complex exists as a monomer or a dimer and forms supercomplexes (SCs) in the inner mitochondrial membrane with ubiquinol-cytochrome c oxidoreductase (cytochrome b-c1 complex, complex III, CIII).</text>
</comment>
<comment type="subcellular location">
    <subcellularLocation>
        <location evidence="1">Mitochondrion inner membrane</location>
        <topology evidence="1">Multi-pass membrane protein</topology>
    </subcellularLocation>
</comment>
<comment type="similarity">
    <text evidence="3">Belongs to the heme-copper respiratory oxidase family.</text>
</comment>
<proteinExistence type="inferred from homology"/>
<gene>
    <name type="primary">COI</name>
</gene>
<protein>
    <recommendedName>
        <fullName>Cytochrome c oxidase subunit 1</fullName>
        <ecNumber>7.1.1.9</ecNumber>
    </recommendedName>
    <alternativeName>
        <fullName>Cytochrome c oxidase polypeptide I</fullName>
    </alternativeName>
</protein>
<feature type="chain" id="PRO_0000183342" description="Cytochrome c oxidase subunit 1">
    <location>
        <begin position="1" status="less than"/>
        <end position="219" status="greater than"/>
    </location>
</feature>
<feature type="topological domain" description="Mitochondrial matrix" evidence="2">
    <location>
        <begin position="1" status="less than"/>
        <end position="1"/>
    </location>
</feature>
<feature type="transmembrane region" description="Helical; Name=1" evidence="2">
    <location>
        <begin position="2"/>
        <end position="22"/>
    </location>
</feature>
<feature type="topological domain" description="Mitochondrial intermembrane" evidence="2">
    <location>
        <begin position="23"/>
        <end position="39"/>
    </location>
</feature>
<feature type="transmembrane region" description="Helical; Name=2" evidence="2">
    <location>
        <begin position="40"/>
        <end position="60"/>
    </location>
</feature>
<feature type="topological domain" description="Mitochondrial matrix" evidence="2">
    <location>
        <begin position="61"/>
        <end position="85"/>
    </location>
</feature>
<feature type="transmembrane region" description="Helical; Name=3" evidence="2">
    <location>
        <begin position="86"/>
        <end position="106"/>
    </location>
</feature>
<feature type="topological domain" description="Mitochondrial intermembrane" evidence="2">
    <location>
        <begin position="107"/>
        <end position="128"/>
    </location>
</feature>
<feature type="transmembrane region" description="Helical; Name=4" evidence="2">
    <location>
        <begin position="129"/>
        <end position="149"/>
    </location>
</feature>
<feature type="topological domain" description="Mitochondrial matrix" evidence="2">
    <location>
        <begin position="150"/>
        <end position="166"/>
    </location>
</feature>
<feature type="transmembrane region" description="Helical; Name=5" evidence="2">
    <location>
        <begin position="167"/>
        <end position="187"/>
    </location>
</feature>
<feature type="topological domain" description="Mitochondrial intermembrane" evidence="2">
    <location>
        <begin position="188"/>
        <end position="219"/>
    </location>
</feature>
<feature type="binding site" evidence="1">
    <location>
        <position position="24"/>
    </location>
    <ligand>
        <name>Ca(2+)</name>
        <dbReference type="ChEBI" id="CHEBI:29108"/>
    </ligand>
</feature>
<feature type="binding site" evidence="1">
    <location>
        <position position="29"/>
    </location>
    <ligand>
        <name>Ca(2+)</name>
        <dbReference type="ChEBI" id="CHEBI:29108"/>
    </ligand>
</feature>
<feature type="binding site" description="axial binding residue" evidence="1">
    <location>
        <position position="45"/>
    </location>
    <ligand>
        <name>Fe(II)-heme a</name>
        <dbReference type="ChEBI" id="CHEBI:61715"/>
        <note>low-spin</note>
    </ligand>
    <ligandPart>
        <name>Fe</name>
        <dbReference type="ChEBI" id="CHEBI:18248"/>
    </ligandPart>
</feature>
<feature type="non-terminal residue">
    <location>
        <position position="1"/>
    </location>
</feature>
<feature type="non-terminal residue">
    <location>
        <position position="219"/>
    </location>
</feature>